<comment type="similarity">
    <text evidence="1">Belongs to the universal ribosomal protein uS9 family.</text>
</comment>
<keyword id="KW-1185">Reference proteome</keyword>
<keyword id="KW-0687">Ribonucleoprotein</keyword>
<keyword id="KW-0689">Ribosomal protein</keyword>
<proteinExistence type="inferred from homology"/>
<organism>
    <name type="scientific">Cereibacter sphaeroides (strain ATCC 17023 / DSM 158 / JCM 6121 / CCUG 31486 / LMG 2827 / NBRC 12203 / NCIMB 8253 / ATH 2.4.1.)</name>
    <name type="common">Rhodobacter sphaeroides</name>
    <dbReference type="NCBI Taxonomy" id="272943"/>
    <lineage>
        <taxon>Bacteria</taxon>
        <taxon>Pseudomonadati</taxon>
        <taxon>Pseudomonadota</taxon>
        <taxon>Alphaproteobacteria</taxon>
        <taxon>Rhodobacterales</taxon>
        <taxon>Paracoccaceae</taxon>
        <taxon>Cereibacter</taxon>
    </lineage>
</organism>
<sequence>MSDIKSLDDLKSVVGEAPVAEVAIAREPVRDSLGRSYATGKRKDAVARVWIKPGSGKVTVNGKPMDEYFARPVLQMILRQPFKVANVEGQFDVMATVAGGGLSGQAGAVKHGISKALQLYEPALRAALKAAGFLTRDSRVVERKKYGKAKARRSFQFSKR</sequence>
<gene>
    <name evidence="1" type="primary">rpsI</name>
    <name type="ordered locus">RHOS4_16210</name>
    <name type="ORF">RSP_0021</name>
</gene>
<accession>Q3J1Z5</accession>
<protein>
    <recommendedName>
        <fullName evidence="1">Small ribosomal subunit protein uS9</fullName>
    </recommendedName>
    <alternativeName>
        <fullName evidence="2">30S ribosomal protein S9</fullName>
    </alternativeName>
</protein>
<evidence type="ECO:0000255" key="1">
    <source>
        <dbReference type="HAMAP-Rule" id="MF_00532"/>
    </source>
</evidence>
<evidence type="ECO:0000305" key="2"/>
<dbReference type="EMBL" id="CP000143">
    <property type="protein sequence ID" value="ABA79189.1"/>
    <property type="molecule type" value="Genomic_DNA"/>
</dbReference>
<dbReference type="RefSeq" id="WP_002720163.1">
    <property type="nucleotide sequence ID" value="NZ_CP030271.1"/>
</dbReference>
<dbReference type="RefSeq" id="YP_353090.1">
    <property type="nucleotide sequence ID" value="NC_007493.2"/>
</dbReference>
<dbReference type="SMR" id="Q3J1Z5"/>
<dbReference type="STRING" id="272943.RSP_0021"/>
<dbReference type="EnsemblBacteria" id="ABA79189">
    <property type="protein sequence ID" value="ABA79189"/>
    <property type="gene ID" value="RSP_0021"/>
</dbReference>
<dbReference type="GeneID" id="67446747"/>
<dbReference type="KEGG" id="rsp:RSP_0021"/>
<dbReference type="PATRIC" id="fig|272943.9.peg.1951"/>
<dbReference type="eggNOG" id="COG0103">
    <property type="taxonomic scope" value="Bacteria"/>
</dbReference>
<dbReference type="OrthoDB" id="9803965at2"/>
<dbReference type="PhylomeDB" id="Q3J1Z5"/>
<dbReference type="Proteomes" id="UP000002703">
    <property type="component" value="Chromosome 1"/>
</dbReference>
<dbReference type="GO" id="GO:0022627">
    <property type="term" value="C:cytosolic small ribosomal subunit"/>
    <property type="evidence" value="ECO:0007669"/>
    <property type="project" value="TreeGrafter"/>
</dbReference>
<dbReference type="GO" id="GO:0003723">
    <property type="term" value="F:RNA binding"/>
    <property type="evidence" value="ECO:0007669"/>
    <property type="project" value="TreeGrafter"/>
</dbReference>
<dbReference type="GO" id="GO:0003735">
    <property type="term" value="F:structural constituent of ribosome"/>
    <property type="evidence" value="ECO:0007669"/>
    <property type="project" value="InterPro"/>
</dbReference>
<dbReference type="GO" id="GO:0006412">
    <property type="term" value="P:translation"/>
    <property type="evidence" value="ECO:0007669"/>
    <property type="project" value="UniProtKB-UniRule"/>
</dbReference>
<dbReference type="FunFam" id="3.30.230.10:FF:000001">
    <property type="entry name" value="30S ribosomal protein S9"/>
    <property type="match status" value="1"/>
</dbReference>
<dbReference type="Gene3D" id="3.30.230.10">
    <property type="match status" value="1"/>
</dbReference>
<dbReference type="HAMAP" id="MF_00532_B">
    <property type="entry name" value="Ribosomal_uS9_B"/>
    <property type="match status" value="1"/>
</dbReference>
<dbReference type="InterPro" id="IPR020568">
    <property type="entry name" value="Ribosomal_Su5_D2-typ_SF"/>
</dbReference>
<dbReference type="InterPro" id="IPR000754">
    <property type="entry name" value="Ribosomal_uS9"/>
</dbReference>
<dbReference type="InterPro" id="IPR023035">
    <property type="entry name" value="Ribosomal_uS9_bac/plastid"/>
</dbReference>
<dbReference type="InterPro" id="IPR020574">
    <property type="entry name" value="Ribosomal_uS9_CS"/>
</dbReference>
<dbReference type="InterPro" id="IPR014721">
    <property type="entry name" value="Ribsml_uS5_D2-typ_fold_subgr"/>
</dbReference>
<dbReference type="NCBIfam" id="NF001099">
    <property type="entry name" value="PRK00132.1"/>
    <property type="match status" value="1"/>
</dbReference>
<dbReference type="PANTHER" id="PTHR21569">
    <property type="entry name" value="RIBOSOMAL PROTEIN S9"/>
    <property type="match status" value="1"/>
</dbReference>
<dbReference type="PANTHER" id="PTHR21569:SF1">
    <property type="entry name" value="SMALL RIBOSOMAL SUBUNIT PROTEIN US9M"/>
    <property type="match status" value="1"/>
</dbReference>
<dbReference type="Pfam" id="PF00380">
    <property type="entry name" value="Ribosomal_S9"/>
    <property type="match status" value="1"/>
</dbReference>
<dbReference type="SUPFAM" id="SSF54211">
    <property type="entry name" value="Ribosomal protein S5 domain 2-like"/>
    <property type="match status" value="1"/>
</dbReference>
<dbReference type="PROSITE" id="PS00360">
    <property type="entry name" value="RIBOSOMAL_S9"/>
    <property type="match status" value="1"/>
</dbReference>
<reference key="1">
    <citation type="submission" date="2005-09" db="EMBL/GenBank/DDBJ databases">
        <title>Complete sequence of chromosome 1 of Rhodobacter sphaeroides 2.4.1.</title>
        <authorList>
            <person name="Copeland A."/>
            <person name="Lucas S."/>
            <person name="Lapidus A."/>
            <person name="Barry K."/>
            <person name="Detter J.C."/>
            <person name="Glavina T."/>
            <person name="Hammon N."/>
            <person name="Israni S."/>
            <person name="Pitluck S."/>
            <person name="Richardson P."/>
            <person name="Mackenzie C."/>
            <person name="Choudhary M."/>
            <person name="Larimer F."/>
            <person name="Hauser L.J."/>
            <person name="Land M."/>
            <person name="Donohue T.J."/>
            <person name="Kaplan S."/>
        </authorList>
    </citation>
    <scope>NUCLEOTIDE SEQUENCE [LARGE SCALE GENOMIC DNA]</scope>
    <source>
        <strain>ATCC 17023 / DSM 158 / JCM 6121 / CCUG 31486 / LMG 2827 / NBRC 12203 / NCIMB 8253 / ATH 2.4.1.</strain>
    </source>
</reference>
<name>RS9_CERS4</name>
<feature type="chain" id="PRO_1000128165" description="Small ribosomal subunit protein uS9">
    <location>
        <begin position="1"/>
        <end position="160"/>
    </location>
</feature>